<accession>Q5D7J2</accession>
<reference key="1">
    <citation type="journal article" date="2005" name="Proc. Natl. Acad. Sci. U.S.A.">
        <title>Positive selection of primate TRIM5alpha identifies a critical species-specific retroviral restriction domain.</title>
        <authorList>
            <person name="Sawyer S.L."/>
            <person name="Wu L.I."/>
            <person name="Emerman M."/>
            <person name="Malik H.S."/>
        </authorList>
    </citation>
    <scope>NUCLEOTIDE SEQUENCE [GENOMIC DNA]</scope>
</reference>
<sequence>MASGILLNVKEEVTCPICLELLTEPLSLPCGHSFCQACITANHRKSMLYKEGERSCPVCRISYQPENIQPNRHVANIVEKLREVKLSPEEGLKVDHCARHGEKLLLFCQEDSKVICWLCERSQEHRGHHTFLMEEVAQEYHVKLQTALEMLRQKQQEAEKLEADIREEKASWKIQIDYDKTNVSADFEQLREILDWEESNELQNLEKEEEDILKSLTKSETEMVQQTQYMRELISDLEHRLQGSMMELLQGVDGIIKRIENMTLKKPKTFHKNQRRVFRAPDLKGMLDMFRELTDVRRYWVDVTLAPNNISHAVIAEDKRQVSSRNPQITYQAPGTLFSFPSLTNFNYCTGVLGSQSITSGKHYWEVDVSKKSAWILGVCAGFQPDAMYNIEQNENYQPKYGYWVIGLQEGVKYSVFQDGSSHTPFAPFIVPLSVIICPDRVGVFVDYEACTVSFFNITNHGFLIYKFSQCSFSKPVFPYLNPRKCTVPMTLCSPSS</sequence>
<gene>
    <name type="primary">TRIM5</name>
</gene>
<proteinExistence type="inferred from homology"/>
<organism>
    <name type="scientific">Papio anubis</name>
    <name type="common">Olive baboon</name>
    <dbReference type="NCBI Taxonomy" id="9555"/>
    <lineage>
        <taxon>Eukaryota</taxon>
        <taxon>Metazoa</taxon>
        <taxon>Chordata</taxon>
        <taxon>Craniata</taxon>
        <taxon>Vertebrata</taxon>
        <taxon>Euteleostomi</taxon>
        <taxon>Mammalia</taxon>
        <taxon>Eutheria</taxon>
        <taxon>Euarchontoglires</taxon>
        <taxon>Primates</taxon>
        <taxon>Haplorrhini</taxon>
        <taxon>Catarrhini</taxon>
        <taxon>Cercopithecidae</taxon>
        <taxon>Cercopithecinae</taxon>
        <taxon>Papio</taxon>
    </lineage>
</organism>
<name>TRIM5_PAPAN</name>
<keyword id="KW-0007">Acetylation</keyword>
<keyword id="KW-0051">Antiviral defense</keyword>
<keyword id="KW-0072">Autophagy</keyword>
<keyword id="KW-0175">Coiled coil</keyword>
<keyword id="KW-0963">Cytoplasm</keyword>
<keyword id="KW-0391">Immunity</keyword>
<keyword id="KW-0399">Innate immunity</keyword>
<keyword id="KW-0479">Metal-binding</keyword>
<keyword id="KW-0539">Nucleus</keyword>
<keyword id="KW-0597">Phosphoprotein</keyword>
<keyword id="KW-1185">Reference proteome</keyword>
<keyword id="KW-0808">Transferase</keyword>
<keyword id="KW-0832">Ubl conjugation</keyword>
<keyword id="KW-0833">Ubl conjugation pathway</keyword>
<keyword id="KW-0862">Zinc</keyword>
<keyword id="KW-0863">Zinc-finger</keyword>
<dbReference type="EC" id="2.3.2.27"/>
<dbReference type="EMBL" id="AY843505">
    <property type="protein sequence ID" value="AAV91976.1"/>
    <property type="molecule type" value="Genomic_DNA"/>
</dbReference>
<dbReference type="RefSeq" id="NP_001106102.1">
    <property type="nucleotide sequence ID" value="NM_001112632.1"/>
</dbReference>
<dbReference type="BMRB" id="Q5D7J2"/>
<dbReference type="SMR" id="Q5D7J2"/>
<dbReference type="STRING" id="9555.ENSPANP00000005557"/>
<dbReference type="GeneID" id="100126714"/>
<dbReference type="KEGG" id="panu:100126714"/>
<dbReference type="CTD" id="85363"/>
<dbReference type="eggNOG" id="KOG2177">
    <property type="taxonomic scope" value="Eukaryota"/>
</dbReference>
<dbReference type="OrthoDB" id="3198at314294"/>
<dbReference type="UniPathway" id="UPA00143"/>
<dbReference type="Proteomes" id="UP000028761">
    <property type="component" value="Unplaced"/>
</dbReference>
<dbReference type="GO" id="GO:0005634">
    <property type="term" value="C:nucleus"/>
    <property type="evidence" value="ECO:0007669"/>
    <property type="project" value="UniProtKB-SubCell"/>
</dbReference>
<dbReference type="GO" id="GO:0000932">
    <property type="term" value="C:P-body"/>
    <property type="evidence" value="ECO:0000250"/>
    <property type="project" value="UniProtKB"/>
</dbReference>
<dbReference type="GO" id="GO:0038187">
    <property type="term" value="F:pattern recognition receptor activity"/>
    <property type="evidence" value="ECO:0000250"/>
    <property type="project" value="UniProtKB"/>
</dbReference>
<dbReference type="GO" id="GO:0004842">
    <property type="term" value="F:ubiquitin-protein transferase activity"/>
    <property type="evidence" value="ECO:0000250"/>
    <property type="project" value="UniProtKB"/>
</dbReference>
<dbReference type="GO" id="GO:0008270">
    <property type="term" value="F:zinc ion binding"/>
    <property type="evidence" value="ECO:0007669"/>
    <property type="project" value="UniProtKB-KW"/>
</dbReference>
<dbReference type="GO" id="GO:0002218">
    <property type="term" value="P:activation of innate immune response"/>
    <property type="evidence" value="ECO:0000250"/>
    <property type="project" value="UniProtKB"/>
</dbReference>
<dbReference type="GO" id="GO:0006914">
    <property type="term" value="P:autophagy"/>
    <property type="evidence" value="ECO:0007669"/>
    <property type="project" value="UniProtKB-KW"/>
</dbReference>
<dbReference type="GO" id="GO:0051607">
    <property type="term" value="P:defense response to virus"/>
    <property type="evidence" value="ECO:0007669"/>
    <property type="project" value="UniProtKB-KW"/>
</dbReference>
<dbReference type="GO" id="GO:0045087">
    <property type="term" value="P:innate immune response"/>
    <property type="evidence" value="ECO:0007669"/>
    <property type="project" value="UniProtKB-KW"/>
</dbReference>
<dbReference type="GO" id="GO:0043123">
    <property type="term" value="P:positive regulation of canonical NF-kappaB signal transduction"/>
    <property type="evidence" value="ECO:0000250"/>
    <property type="project" value="UniProtKB"/>
</dbReference>
<dbReference type="GO" id="GO:0043410">
    <property type="term" value="P:positive regulation of MAPK cascade"/>
    <property type="evidence" value="ECO:0000250"/>
    <property type="project" value="UniProtKB"/>
</dbReference>
<dbReference type="GO" id="GO:0051092">
    <property type="term" value="P:positive regulation of NF-kappaB transcription factor activity"/>
    <property type="evidence" value="ECO:0000250"/>
    <property type="project" value="UniProtKB"/>
</dbReference>
<dbReference type="GO" id="GO:0070534">
    <property type="term" value="P:protein K63-linked ubiquitination"/>
    <property type="evidence" value="ECO:0000250"/>
    <property type="project" value="UniProtKB"/>
</dbReference>
<dbReference type="GO" id="GO:0031664">
    <property type="term" value="P:regulation of lipopolysaccharide-mediated signaling pathway"/>
    <property type="evidence" value="ECO:0000250"/>
    <property type="project" value="UniProtKB"/>
</dbReference>
<dbReference type="CDD" id="cd19761">
    <property type="entry name" value="Bbox2_TRIM5-like"/>
    <property type="match status" value="1"/>
</dbReference>
<dbReference type="CDD" id="cd16591">
    <property type="entry name" value="RING-HC_TRIM5-like_C-IV"/>
    <property type="match status" value="1"/>
</dbReference>
<dbReference type="CDD" id="cd15822">
    <property type="entry name" value="SPRY_PRY_TRIM5"/>
    <property type="match status" value="1"/>
</dbReference>
<dbReference type="FunFam" id="2.60.120.920:FF:000023">
    <property type="entry name" value="Tripartite motif-containing 5 (Predicted)"/>
    <property type="match status" value="1"/>
</dbReference>
<dbReference type="FunFam" id="3.30.160.60:FF:000386">
    <property type="entry name" value="Tripartite motif-containing 5 (Predicted)"/>
    <property type="match status" value="1"/>
</dbReference>
<dbReference type="FunFam" id="3.30.40.10:FF:000144">
    <property type="entry name" value="Tripartite motif-containing 5 (Predicted)"/>
    <property type="match status" value="1"/>
</dbReference>
<dbReference type="Gene3D" id="2.60.120.920">
    <property type="match status" value="1"/>
</dbReference>
<dbReference type="Gene3D" id="3.30.160.60">
    <property type="entry name" value="Classic Zinc Finger"/>
    <property type="match status" value="1"/>
</dbReference>
<dbReference type="Gene3D" id="3.30.40.10">
    <property type="entry name" value="Zinc/RING finger domain, C3HC4 (zinc finger)"/>
    <property type="match status" value="1"/>
</dbReference>
<dbReference type="InterPro" id="IPR001870">
    <property type="entry name" value="B30.2/SPRY"/>
</dbReference>
<dbReference type="InterPro" id="IPR043136">
    <property type="entry name" value="B30.2/SPRY_sf"/>
</dbReference>
<dbReference type="InterPro" id="IPR003879">
    <property type="entry name" value="Butyrophylin_SPRY"/>
</dbReference>
<dbReference type="InterPro" id="IPR013320">
    <property type="entry name" value="ConA-like_dom_sf"/>
</dbReference>
<dbReference type="InterPro" id="IPR003877">
    <property type="entry name" value="SPRY_dom"/>
</dbReference>
<dbReference type="InterPro" id="IPR050143">
    <property type="entry name" value="TRIM/RBCC"/>
</dbReference>
<dbReference type="InterPro" id="IPR027370">
    <property type="entry name" value="Znf-RING_euk"/>
</dbReference>
<dbReference type="InterPro" id="IPR000315">
    <property type="entry name" value="Znf_B-box"/>
</dbReference>
<dbReference type="InterPro" id="IPR001841">
    <property type="entry name" value="Znf_RING"/>
</dbReference>
<dbReference type="InterPro" id="IPR013083">
    <property type="entry name" value="Znf_RING/FYVE/PHD"/>
</dbReference>
<dbReference type="InterPro" id="IPR017907">
    <property type="entry name" value="Znf_RING_CS"/>
</dbReference>
<dbReference type="PANTHER" id="PTHR24103">
    <property type="entry name" value="E3 UBIQUITIN-PROTEIN LIGASE TRIM"/>
    <property type="match status" value="1"/>
</dbReference>
<dbReference type="Pfam" id="PF00622">
    <property type="entry name" value="SPRY"/>
    <property type="match status" value="1"/>
</dbReference>
<dbReference type="Pfam" id="PF00643">
    <property type="entry name" value="zf-B_box"/>
    <property type="match status" value="1"/>
</dbReference>
<dbReference type="Pfam" id="PF13445">
    <property type="entry name" value="zf-RING_UBOX"/>
    <property type="match status" value="1"/>
</dbReference>
<dbReference type="PRINTS" id="PR01407">
    <property type="entry name" value="BUTYPHLNCDUF"/>
</dbReference>
<dbReference type="SMART" id="SM00336">
    <property type="entry name" value="BBOX"/>
    <property type="match status" value="1"/>
</dbReference>
<dbReference type="SMART" id="SM00184">
    <property type="entry name" value="RING"/>
    <property type="match status" value="1"/>
</dbReference>
<dbReference type="SMART" id="SM00449">
    <property type="entry name" value="SPRY"/>
    <property type="match status" value="1"/>
</dbReference>
<dbReference type="SUPFAM" id="SSF57845">
    <property type="entry name" value="B-box zinc-binding domain"/>
    <property type="match status" value="1"/>
</dbReference>
<dbReference type="SUPFAM" id="SSF49899">
    <property type="entry name" value="Concanavalin A-like lectins/glucanases"/>
    <property type="match status" value="1"/>
</dbReference>
<dbReference type="SUPFAM" id="SSF57850">
    <property type="entry name" value="RING/U-box"/>
    <property type="match status" value="1"/>
</dbReference>
<dbReference type="PROSITE" id="PS50188">
    <property type="entry name" value="B302_SPRY"/>
    <property type="match status" value="1"/>
</dbReference>
<dbReference type="PROSITE" id="PS50119">
    <property type="entry name" value="ZF_BBOX"/>
    <property type="match status" value="1"/>
</dbReference>
<dbReference type="PROSITE" id="PS00518">
    <property type="entry name" value="ZF_RING_1"/>
    <property type="match status" value="1"/>
</dbReference>
<dbReference type="PROSITE" id="PS50089">
    <property type="entry name" value="ZF_RING_2"/>
    <property type="match status" value="1"/>
</dbReference>
<comment type="function">
    <text evidence="3">Capsid-specific restriction factor that prevents infection from non-host-adapted retroviruses. Blocks viral replication early in the life cycle, after viral entry but before reverse transcription. In addition to acting as a capsid-specific restriction factor, also acts as a pattern recognition receptor that activates innate immune signaling in response to the retroviral capsid lattice. Binding to the viral capsid triggers its E3 ubiquitin ligase activity, and in concert with the heterodimeric ubiquitin conjugating enzyme complex UBE2V1-UBE2N (also known as UBC13-UEV1A complex) generates 'Lys-63'-linked polyubiquitin chains, which in turn are catalysts in the autophosphorylation of the MAP3K7/TAK1 complex (includes TAK1, TAB2, and TAB3). Activation of the MAP3K7/TAK1 complex by autophosphorylation results in the induction and expression of NF-kappa-B and MAPK-responsive inflammatory genes, thereby leading to an innate immune response in the infected cell. Plays a role in regulating autophagy through activation of autophagy regulator BECN1 by causing its dissociation from its inhibitors BCL2 and TAB2.</text>
</comment>
<comment type="catalytic activity">
    <reaction>
        <text>S-ubiquitinyl-[E2 ubiquitin-conjugating enzyme]-L-cysteine + [acceptor protein]-L-lysine = [E2 ubiquitin-conjugating enzyme]-L-cysteine + N(6)-ubiquitinyl-[acceptor protein]-L-lysine.</text>
        <dbReference type="EC" id="2.3.2.27"/>
    </reaction>
</comment>
<comment type="pathway">
    <text>Protein modification; protein ubiquitination.</text>
</comment>
<comment type="subunit">
    <text evidence="2 3">Can form homodimers and homotrimers. In addition to lower-order dimerization, also exhibits a higher-order multimerization and both low- and high-order multimerizations are essential for its restriction activity. Interacts with BTBD1 and BTBD2. Interacts with PSMC4, PSMC5, PSMD7 and HSPA8/HSC70. Interacts (via B30.2/SPRY domain) with HSPA1A/B. Interacts with PSMC2, MAP3K7/TAK1, TAB2 and TAB3. Interacts with SQSTM1. Interacts with TRIM6 and TRIM34. Interacts with ULK1 (phosphorylated form), GABARAP, GABARAPL1, GABARAPL2, MAP1LC3A, MAP1LC3C and BECN1.</text>
</comment>
<comment type="subcellular location">
    <subcellularLocation>
        <location evidence="2">Cytoplasm</location>
    </subcellularLocation>
    <subcellularLocation>
        <location evidence="2">Nucleus</location>
    </subcellularLocation>
    <text evidence="2">Predominantly localizes in cytoplasmic bodies. Localization may be influenced by the coexpression of other TRIM proteins, hence partial nuclear localization is observed in the presence of TRIM22 or TRIM27. In cytoplasmic bodies, colocalizes with proteasomal subunits and SQSTM1.</text>
</comment>
<comment type="domain">
    <text evidence="2 3">The B box-type zinc finger domain and the coiled-coil domain contribute to the higher and low order multimerization respectively which is essential for restriction activity. The coiled coil domain is important for higher order multimerization by promoting the initial dimerization.</text>
</comment>
<comment type="domain">
    <text evidence="1">The B30.2/SPRY domain acts as a capsid recognition domain. Polymorphisms in this domain explain the observed species-specific differences among orthologs (By similarity).</text>
</comment>
<comment type="domain">
    <text evidence="1">The RING-type zinc finger domain confers E3 ubiquitin ligase activity and is essential for retrovirus restriction activity, autoubiquitination and higher-order multimerization.</text>
</comment>
<comment type="PTM">
    <text evidence="1">Degraded in a proteasome-independent fashion in the absence of viral infection but in a proteasome-dependent fashion following exposure to restriction sensitive virus.</text>
</comment>
<comment type="PTM">
    <text evidence="1">Autoubiquitinated in a RING finger- and UBE2D2-dependent manner. Monoubiquitinated by TRIM21. Deubiquitinated by Yersinia YopJ. Ubiquitination may not lead to proteasomal degradation (By similarity).</text>
</comment>
<comment type="similarity">
    <text evidence="8">Belongs to the TRIM/RBCC family.</text>
</comment>
<evidence type="ECO:0000250" key="1"/>
<evidence type="ECO:0000250" key="2">
    <source>
        <dbReference type="UniProtKB" id="Q0PF16"/>
    </source>
</evidence>
<evidence type="ECO:0000250" key="3">
    <source>
        <dbReference type="UniProtKB" id="Q9C035"/>
    </source>
</evidence>
<evidence type="ECO:0000255" key="4"/>
<evidence type="ECO:0000255" key="5">
    <source>
        <dbReference type="PROSITE-ProRule" id="PRU00024"/>
    </source>
</evidence>
<evidence type="ECO:0000255" key="6">
    <source>
        <dbReference type="PROSITE-ProRule" id="PRU00175"/>
    </source>
</evidence>
<evidence type="ECO:0000255" key="7">
    <source>
        <dbReference type="PROSITE-ProRule" id="PRU00548"/>
    </source>
</evidence>
<evidence type="ECO:0000305" key="8"/>
<feature type="initiator methionine" description="Removed" evidence="3">
    <location>
        <position position="1"/>
    </location>
</feature>
<feature type="chain" id="PRO_0000273469" description="Tripartite motif-containing protein 5">
    <location>
        <begin position="2"/>
        <end position="497"/>
    </location>
</feature>
<feature type="domain" description="B30.2/SPRY" evidence="7">
    <location>
        <begin position="283"/>
        <end position="497"/>
    </location>
</feature>
<feature type="zinc finger region" description="RING-type" evidence="6">
    <location>
        <begin position="15"/>
        <end position="60"/>
    </location>
</feature>
<feature type="zinc finger region" description="B box-type" evidence="5">
    <location>
        <begin position="92"/>
        <end position="133"/>
    </location>
</feature>
<feature type="region of interest" description="Required for interaction with GABARAP and for autophagy" evidence="2">
    <location>
        <begin position="187"/>
        <end position="200"/>
    </location>
</feature>
<feature type="coiled-coil region" evidence="4">
    <location>
        <begin position="137"/>
        <end position="225"/>
    </location>
</feature>
<feature type="binding site" evidence="5">
    <location>
        <position position="97"/>
    </location>
    <ligand>
        <name>Zn(2+)</name>
        <dbReference type="ChEBI" id="CHEBI:29105"/>
    </ligand>
</feature>
<feature type="binding site" evidence="5">
    <location>
        <position position="100"/>
    </location>
    <ligand>
        <name>Zn(2+)</name>
        <dbReference type="ChEBI" id="CHEBI:29105"/>
    </ligand>
</feature>
<feature type="binding site" evidence="5">
    <location>
        <position position="119"/>
    </location>
    <ligand>
        <name>Zn(2+)</name>
        <dbReference type="ChEBI" id="CHEBI:29105"/>
    </ligand>
</feature>
<feature type="binding site" evidence="5">
    <location>
        <position position="125"/>
    </location>
    <ligand>
        <name>Zn(2+)</name>
        <dbReference type="ChEBI" id="CHEBI:29105"/>
    </ligand>
</feature>
<feature type="modified residue" description="N-acetylalanine" evidence="3">
    <location>
        <position position="2"/>
    </location>
</feature>
<feature type="modified residue" description="Phosphoserine" evidence="3">
    <location>
        <position position="87"/>
    </location>
</feature>
<protein>
    <recommendedName>
        <fullName>Tripartite motif-containing protein 5</fullName>
        <ecNumber>2.3.2.27</ecNumber>
    </recommendedName>
    <alternativeName>
        <fullName evidence="8">RING-type E3 ubiquitin transferase TRIM5</fullName>
    </alternativeName>
    <alternativeName>
        <fullName>TRIM5alpha</fullName>
    </alternativeName>
</protein>